<keyword id="KW-1003">Cell membrane</keyword>
<keyword id="KW-0145">Chemotaxis</keyword>
<keyword id="KW-1015">Disulfide bond</keyword>
<keyword id="KW-0297">G-protein coupled receptor</keyword>
<keyword id="KW-0325">Glycoprotein</keyword>
<keyword id="KW-0472">Membrane</keyword>
<keyword id="KW-0675">Receptor</keyword>
<keyword id="KW-1185">Reference proteome</keyword>
<keyword id="KW-0807">Transducer</keyword>
<keyword id="KW-0812">Transmembrane</keyword>
<keyword id="KW-1133">Transmembrane helix</keyword>
<name>PTAFR_CAPHI</name>
<sequence>MEPNNSFRVDSEFRYTLFPIFYSIVFVLGVIANSYVLWVFARLYPSKKFNEIKIFMVNLTMADLLFLVTLPLWIVYYYNQGDWILPKFLCNLAGCFFFINTYCSVAFLAVITYNRFQAVTRPIKTAQATTRKRGFLLSLIIWVSIVGAASYFFVLDSTNSEPKKTGSGNITRCFEHYEKGSIPVLIIHIFLVFSFFLVFLIILFCNLVIIRTLLTQQVQMQRNAEVKRRALWMVCTVLAVFVICFVPHHLVQLPWTLAELGFQDTDFHQGINDAHQVTLCLLSTNCVLDPIIYCFLTKKFRKHLTEKLYSMRESRKCSRATSETGTEVVVQLKDAPIKSLKY</sequence>
<accession>Q9GK76</accession>
<reference evidence="5" key="1">
    <citation type="journal article" date="2001" name="DNA Seq.">
        <title>Comparison of the coding sequence of the platelet-activating factor receptor gene in three species.</title>
        <authorList>
            <person name="Yang W."/>
            <person name="Diehl J.R."/>
            <person name="Roudebush W.E."/>
        </authorList>
    </citation>
    <scope>NUCLEOTIDE SEQUENCE [GENOMIC DNA]</scope>
</reference>
<protein>
    <recommendedName>
        <fullName>Platelet-activating factor receptor</fullName>
        <shortName>PAF-R</shortName>
        <shortName>PAFr</shortName>
    </recommendedName>
</protein>
<evidence type="ECO:0000250" key="1"/>
<evidence type="ECO:0000250" key="2">
    <source>
        <dbReference type="UniProtKB" id="P25105"/>
    </source>
</evidence>
<evidence type="ECO:0000255" key="3"/>
<evidence type="ECO:0000255" key="4">
    <source>
        <dbReference type="PROSITE-ProRule" id="PRU00521"/>
    </source>
</evidence>
<evidence type="ECO:0000312" key="5">
    <source>
        <dbReference type="EMBL" id="AAG39982.1"/>
    </source>
</evidence>
<feature type="chain" id="PRO_0000070090" description="Platelet-activating factor receptor">
    <location>
        <begin position="1"/>
        <end position="342"/>
    </location>
</feature>
<feature type="topological domain" description="Extracellular" evidence="3">
    <location>
        <begin position="1"/>
        <end position="16"/>
    </location>
</feature>
<feature type="transmembrane region" description="Helical; Name=1" evidence="3">
    <location>
        <begin position="17"/>
        <end position="38"/>
    </location>
</feature>
<feature type="topological domain" description="Cytoplasmic" evidence="3">
    <location>
        <begin position="39"/>
        <end position="54"/>
    </location>
</feature>
<feature type="transmembrane region" description="Helical; Name=2" evidence="3">
    <location>
        <begin position="55"/>
        <end position="74"/>
    </location>
</feature>
<feature type="topological domain" description="Extracellular" evidence="3">
    <location>
        <begin position="75"/>
        <end position="91"/>
    </location>
</feature>
<feature type="transmembrane region" description="Helical; Name=3" evidence="3">
    <location>
        <begin position="92"/>
        <end position="113"/>
    </location>
</feature>
<feature type="topological domain" description="Cytoplasmic" evidence="3">
    <location>
        <begin position="114"/>
        <end position="133"/>
    </location>
</feature>
<feature type="transmembrane region" description="Helical; Name=4" evidence="3">
    <location>
        <begin position="134"/>
        <end position="155"/>
    </location>
</feature>
<feature type="topological domain" description="Extracellular" evidence="3">
    <location>
        <begin position="156"/>
        <end position="184"/>
    </location>
</feature>
<feature type="transmembrane region" description="Helical; Name=5" evidence="3">
    <location>
        <begin position="185"/>
        <end position="205"/>
    </location>
</feature>
<feature type="topological domain" description="Cytoplasmic" evidence="3">
    <location>
        <begin position="206"/>
        <end position="233"/>
    </location>
</feature>
<feature type="transmembrane region" description="Helical; Name=6" evidence="3">
    <location>
        <begin position="234"/>
        <end position="254"/>
    </location>
</feature>
<feature type="topological domain" description="Extracellular" evidence="3">
    <location>
        <begin position="255"/>
        <end position="276"/>
    </location>
</feature>
<feature type="transmembrane region" description="Helical; Name=7" evidence="3">
    <location>
        <begin position="277"/>
        <end position="296"/>
    </location>
</feature>
<feature type="topological domain" description="Cytoplasmic" evidence="3">
    <location>
        <begin position="297"/>
        <end position="342"/>
    </location>
</feature>
<feature type="glycosylation site" description="N-linked (GlcNAc...) asparagine" evidence="3">
    <location>
        <position position="4"/>
    </location>
</feature>
<feature type="glycosylation site" description="N-linked (GlcNAc...) asparagine" evidence="3">
    <location>
        <position position="169"/>
    </location>
</feature>
<feature type="disulfide bond" evidence="2 4">
    <location>
        <begin position="90"/>
        <end position="173"/>
    </location>
</feature>
<dbReference type="EMBL" id="AF302764">
    <property type="protein sequence ID" value="AAG39982.1"/>
    <property type="molecule type" value="Genomic_DNA"/>
</dbReference>
<dbReference type="SMR" id="Q9GK76"/>
<dbReference type="STRING" id="9925.ENSCHIP00000009023"/>
<dbReference type="GlyCosmos" id="Q9GK76">
    <property type="glycosylation" value="2 sites, No reported glycans"/>
</dbReference>
<dbReference type="Proteomes" id="UP000291000">
    <property type="component" value="Unassembled WGS sequence"/>
</dbReference>
<dbReference type="Proteomes" id="UP000694566">
    <property type="component" value="Unplaced"/>
</dbReference>
<dbReference type="GO" id="GO:0016020">
    <property type="term" value="C:membrane"/>
    <property type="evidence" value="ECO:0000303"/>
    <property type="project" value="UniProtKB"/>
</dbReference>
<dbReference type="GO" id="GO:0005886">
    <property type="term" value="C:plasma membrane"/>
    <property type="evidence" value="ECO:0007669"/>
    <property type="project" value="UniProtKB-SubCell"/>
</dbReference>
<dbReference type="GO" id="GO:0045028">
    <property type="term" value="F:G protein-coupled purinergic nucleotide receptor activity"/>
    <property type="evidence" value="ECO:0007669"/>
    <property type="project" value="TreeGrafter"/>
</dbReference>
<dbReference type="GO" id="GO:0004992">
    <property type="term" value="F:platelet activating factor receptor activity"/>
    <property type="evidence" value="ECO:0007669"/>
    <property type="project" value="InterPro"/>
</dbReference>
<dbReference type="GO" id="GO:0006935">
    <property type="term" value="P:chemotaxis"/>
    <property type="evidence" value="ECO:0007669"/>
    <property type="project" value="UniProtKB-KW"/>
</dbReference>
<dbReference type="GO" id="GO:0055085">
    <property type="term" value="P:transmembrane transport"/>
    <property type="evidence" value="ECO:0007669"/>
    <property type="project" value="InterPro"/>
</dbReference>
<dbReference type="CDD" id="cd15147">
    <property type="entry name" value="7tmA_PAFR"/>
    <property type="match status" value="1"/>
</dbReference>
<dbReference type="FunFam" id="1.20.1070.10:FF:000204">
    <property type="entry name" value="platelet-activating factor receptor"/>
    <property type="match status" value="1"/>
</dbReference>
<dbReference type="Gene3D" id="1.20.1070.10">
    <property type="entry name" value="Rhodopsin 7-helix transmembrane proteins"/>
    <property type="match status" value="1"/>
</dbReference>
<dbReference type="InterPro" id="IPR004680">
    <property type="entry name" value="Cit_transptr-like_dom"/>
</dbReference>
<dbReference type="InterPro" id="IPR000276">
    <property type="entry name" value="GPCR_Rhodpsn"/>
</dbReference>
<dbReference type="InterPro" id="IPR017452">
    <property type="entry name" value="GPCR_Rhodpsn_7TM"/>
</dbReference>
<dbReference type="InterPro" id="IPR002282">
    <property type="entry name" value="PAF_rcpt"/>
</dbReference>
<dbReference type="PANTHER" id="PTHR24233">
    <property type="entry name" value="P2Y PURINOCEPTOR-RELATED G-PROTEIN COUPLED RECEPTOR"/>
    <property type="match status" value="1"/>
</dbReference>
<dbReference type="PANTHER" id="PTHR24233:SF6">
    <property type="entry name" value="PLATELET-ACTIVATING FACTOR RECEPTOR"/>
    <property type="match status" value="1"/>
</dbReference>
<dbReference type="Pfam" id="PF00001">
    <property type="entry name" value="7tm_1"/>
    <property type="match status" value="1"/>
</dbReference>
<dbReference type="Pfam" id="PF03600">
    <property type="entry name" value="CitMHS"/>
    <property type="match status" value="1"/>
</dbReference>
<dbReference type="PRINTS" id="PR00237">
    <property type="entry name" value="GPCRRHODOPSN"/>
</dbReference>
<dbReference type="PRINTS" id="PR01153">
    <property type="entry name" value="PAFRECEPTOR"/>
</dbReference>
<dbReference type="SUPFAM" id="SSF81321">
    <property type="entry name" value="Family A G protein-coupled receptor-like"/>
    <property type="match status" value="1"/>
</dbReference>
<dbReference type="PROSITE" id="PS00237">
    <property type="entry name" value="G_PROTEIN_RECEP_F1_1"/>
    <property type="match status" value="1"/>
</dbReference>
<dbReference type="PROSITE" id="PS50262">
    <property type="entry name" value="G_PROTEIN_RECEP_F1_2"/>
    <property type="match status" value="1"/>
</dbReference>
<gene>
    <name evidence="2" type="primary">PTAFR</name>
    <name type="synonym">PAFR</name>
</gene>
<comment type="function">
    <text evidence="1">Receptor for platelet activating factor, a chemotactic phospholipid mediator that possesses potent inflammatory, smooth-muscle contractile and hypotensive activity. Seems to mediate its action via a G protein that activates a phosphatidylinositol-calcium second messenger system (By similarity).</text>
</comment>
<comment type="subunit">
    <text evidence="1">Interacts with ARRB1.</text>
</comment>
<comment type="subcellular location">
    <subcellularLocation>
        <location>Cell membrane</location>
        <topology>Multi-pass membrane protein</topology>
    </subcellularLocation>
</comment>
<comment type="similarity">
    <text evidence="4">Belongs to the G-protein coupled receptor 1 family.</text>
</comment>
<proteinExistence type="inferred from homology"/>
<organism>
    <name type="scientific">Capra hircus</name>
    <name type="common">Goat</name>
    <dbReference type="NCBI Taxonomy" id="9925"/>
    <lineage>
        <taxon>Eukaryota</taxon>
        <taxon>Metazoa</taxon>
        <taxon>Chordata</taxon>
        <taxon>Craniata</taxon>
        <taxon>Vertebrata</taxon>
        <taxon>Euteleostomi</taxon>
        <taxon>Mammalia</taxon>
        <taxon>Eutheria</taxon>
        <taxon>Laurasiatheria</taxon>
        <taxon>Artiodactyla</taxon>
        <taxon>Ruminantia</taxon>
        <taxon>Pecora</taxon>
        <taxon>Bovidae</taxon>
        <taxon>Caprinae</taxon>
        <taxon>Capra</taxon>
    </lineage>
</organism>